<sequence length="521" mass="57890">MHDSPPFKVIIVGAGVTGLTLAHCLVKAGIDYALLDKGVVAPGFGTTITLQPHGCRILHQLGCLDAVLAKCDVMGGASCRDPNGKIFTSNDFFGVVRKFAGYDTRTLDRQVFLHELYELLPDKSKVYEKARVEEIIEENSTTRVILADGREFAGDLVVGADGVHSKVREIMWDKANAAHPGMITVEEKRAMVTQYNAIVMASSPVPGISAHDMEVTSNDNYSFLLLCQPDWISIIVHSKLPDDQQCTWPTRRRYTETDMEELVSKIIERPVTGSVVFGELWKRRLKAQMISLEEGVLSHWTFGRIALAGDAVHKVTPNSALGGNTAMEDAVVIANTLHALLAMHPNKKPSDVEVRDAMREKYQNTRVDRARAIVKAGGDLTRQQAYDGWKAYIKQRWLTPIIGLDTLAQKIAGLCVTAPKLAYVDFDERRGILGWQDTLAAEKERESKTQVKVPIKQKKGLSWSTWNGGFEAIVPQILVLWAGLWLAICFFHLVFSGNHVPGFGSEVARFFTVYNETWMHS</sequence>
<evidence type="ECO:0000250" key="1">
    <source>
        <dbReference type="UniProtKB" id="B8M9J8"/>
    </source>
</evidence>
<evidence type="ECO:0000255" key="2"/>
<evidence type="ECO:0000255" key="3">
    <source>
        <dbReference type="PROSITE-ProRule" id="PRU00498"/>
    </source>
</evidence>
<evidence type="ECO:0000269" key="4">
    <source>
    </source>
</evidence>
<evidence type="ECO:0000269" key="5">
    <source>
    </source>
</evidence>
<evidence type="ECO:0000303" key="6">
    <source>
    </source>
</evidence>
<evidence type="ECO:0000305" key="7"/>
<evidence type="ECO:0000305" key="8">
    <source>
    </source>
</evidence>
<evidence type="ECO:0000305" key="9">
    <source>
    </source>
</evidence>
<accession>A0A0N0DCA8</accession>
<protein>
    <recommendedName>
        <fullName evidence="6">FAD-dependent monooxygenase DEP2</fullName>
        <ecNumber evidence="8">1.-.-.-</ecNumber>
    </recommendedName>
    <alternativeName>
        <fullName evidence="6">Depudecin biosynthesis cluster protein 2</fullName>
    </alternativeName>
</protein>
<comment type="function">
    <text evidence="4 5">Part of the gene cluster that mediates the biosynthesis of depudecin, a highly oxidized eleven-carbon linear polyketide that acts as a histone deacetylase (HDAC) inhibitor and makes a small contribution to pathogenesis (PubMed:19737099, PubMed:28460114). The reducing polyketide synthase DEP5 is the central enzyme in depudecin biosynthesis by yielding the backbone polyketide chain (PubMed:19737099). The monooxygenases DEP2 and DEP4, as well as the uncharacterized protein DEP1, then act as tailoring enzymes to modify the intermediate polyketide chain into depudecin (PubMed:19737099).</text>
</comment>
<comment type="cofactor">
    <cofactor evidence="7">
        <name>FAD</name>
        <dbReference type="ChEBI" id="CHEBI:57692"/>
    </cofactor>
</comment>
<comment type="pathway">
    <text evidence="9">Polyketide biosynthesis.</text>
</comment>
<comment type="subcellular location">
    <subcellularLocation>
        <location evidence="2">Membrane</location>
        <topology evidence="2">Single-pass type I membrane protein</topology>
    </subcellularLocation>
</comment>
<comment type="induction">
    <text evidence="5">Expression correlates with the production of depudecin with high levels on oat grain medium, and minimal levels on oat flower medium and complete medium (PubMed:28460114).</text>
</comment>
<comment type="similarity">
    <text evidence="7">Belongs to the paxM FAD-dependent monooxygenase family.</text>
</comment>
<organism>
    <name type="scientific">Fusarium langsethiae</name>
    <dbReference type="NCBI Taxonomy" id="179993"/>
    <lineage>
        <taxon>Eukaryota</taxon>
        <taxon>Fungi</taxon>
        <taxon>Dikarya</taxon>
        <taxon>Ascomycota</taxon>
        <taxon>Pezizomycotina</taxon>
        <taxon>Sordariomycetes</taxon>
        <taxon>Hypocreomycetidae</taxon>
        <taxon>Hypocreales</taxon>
        <taxon>Nectriaceae</taxon>
        <taxon>Fusarium</taxon>
    </lineage>
</organism>
<gene>
    <name evidence="6" type="primary">DEP2</name>
    <name type="ORF">FLAG1_09235</name>
</gene>
<proteinExistence type="evidence at transcript level"/>
<reference key="1">
    <citation type="submission" date="2015-04" db="EMBL/GenBank/DDBJ databases">
        <title>The draft genome sequence of Fusarium langsethiae, a T-2/HT-2 mycotoxin producer.</title>
        <authorList>
            <person name="Lysoe E."/>
            <person name="Divon H.H."/>
            <person name="Terzi V."/>
            <person name="Orru L."/>
            <person name="Lamontanara A."/>
            <person name="Kolseth A.-K."/>
            <person name="Frandsen R.J."/>
            <person name="Nielsen K."/>
            <person name="Thrane U."/>
        </authorList>
    </citation>
    <scope>NUCLEOTIDE SEQUENCE [LARGE SCALE GENOMIC DNA]</scope>
    <source>
        <strain>Fl201059</strain>
    </source>
</reference>
<reference key="2">
    <citation type="journal article" date="2009" name="Mol. Plant Microbe Interact.">
        <title>Biosynthesis and role in virulence of the histone deacetylase inhibitor depudecin from Alternaria brassicicola.</title>
        <authorList>
            <person name="Wight W.D."/>
            <person name="Kim K.-H."/>
            <person name="Lawrence C.B."/>
            <person name="Walton J.D."/>
        </authorList>
    </citation>
    <scope>FUNCTION</scope>
</reference>
<reference key="3">
    <citation type="journal article" date="2017" name="Mol. Biol. Evol.">
        <title>Differential retention of gene functions in a secondary metabolite cluster.</title>
        <authorList>
            <person name="Reynolds H."/>
            <person name="Slot J.C."/>
            <person name="Divon H.H."/>
            <person name="Lysoee E."/>
            <person name="Proctor R.H."/>
            <person name="Brown D.W."/>
        </authorList>
    </citation>
    <scope>FUNCTION</scope>
    <scope>INDUCTION</scope>
    <scope>PATHWAY</scope>
</reference>
<dbReference type="EC" id="1.-.-.-" evidence="8"/>
<dbReference type="EMBL" id="JXCE01000338">
    <property type="protein sequence ID" value="KPA37944.1"/>
    <property type="molecule type" value="Genomic_DNA"/>
</dbReference>
<dbReference type="SMR" id="A0A0N0DCA8"/>
<dbReference type="GlyCosmos" id="A0A0N0DCA8">
    <property type="glycosylation" value="3 sites, No reported glycans"/>
</dbReference>
<dbReference type="OrthoDB" id="2431938at2759"/>
<dbReference type="Proteomes" id="UP000037904">
    <property type="component" value="Unassembled WGS sequence"/>
</dbReference>
<dbReference type="GO" id="GO:0016020">
    <property type="term" value="C:membrane"/>
    <property type="evidence" value="ECO:0007669"/>
    <property type="project" value="UniProtKB-SubCell"/>
</dbReference>
<dbReference type="GO" id="GO:0071949">
    <property type="term" value="F:FAD binding"/>
    <property type="evidence" value="ECO:0007669"/>
    <property type="project" value="InterPro"/>
</dbReference>
<dbReference type="GO" id="GO:0004497">
    <property type="term" value="F:monooxygenase activity"/>
    <property type="evidence" value="ECO:0007669"/>
    <property type="project" value="UniProtKB-KW"/>
</dbReference>
<dbReference type="Gene3D" id="3.50.50.60">
    <property type="entry name" value="FAD/NAD(P)-binding domain"/>
    <property type="match status" value="1"/>
</dbReference>
<dbReference type="InterPro" id="IPR002938">
    <property type="entry name" value="FAD-bd"/>
</dbReference>
<dbReference type="InterPro" id="IPR036188">
    <property type="entry name" value="FAD/NAD-bd_sf"/>
</dbReference>
<dbReference type="InterPro" id="IPR050562">
    <property type="entry name" value="FAD_mOase_fung"/>
</dbReference>
<dbReference type="PANTHER" id="PTHR47356:SF2">
    <property type="entry name" value="FAD-BINDING DOMAIN-CONTAINING PROTEIN-RELATED"/>
    <property type="match status" value="1"/>
</dbReference>
<dbReference type="PANTHER" id="PTHR47356">
    <property type="entry name" value="FAD-DEPENDENT MONOOXYGENASE ASQG-RELATED"/>
    <property type="match status" value="1"/>
</dbReference>
<dbReference type="Pfam" id="PF01494">
    <property type="entry name" value="FAD_binding_3"/>
    <property type="match status" value="1"/>
</dbReference>
<dbReference type="PRINTS" id="PR00420">
    <property type="entry name" value="RNGMNOXGNASE"/>
</dbReference>
<dbReference type="SUPFAM" id="SSF51905">
    <property type="entry name" value="FAD/NAD(P)-binding domain"/>
    <property type="match status" value="1"/>
</dbReference>
<keyword id="KW-0274">FAD</keyword>
<keyword id="KW-0285">Flavoprotein</keyword>
<keyword id="KW-0325">Glycoprotein</keyword>
<keyword id="KW-0472">Membrane</keyword>
<keyword id="KW-0503">Monooxygenase</keyword>
<keyword id="KW-0560">Oxidoreductase</keyword>
<keyword id="KW-1185">Reference proteome</keyword>
<keyword id="KW-0732">Signal</keyword>
<keyword id="KW-0812">Transmembrane</keyword>
<keyword id="KW-1133">Transmembrane helix</keyword>
<feature type="signal peptide" evidence="2">
    <location>
        <begin position="1"/>
        <end position="22"/>
    </location>
</feature>
<feature type="chain" id="PRO_0000441938" description="FAD-dependent monooxygenase DEP2">
    <location>
        <begin position="23"/>
        <end position="521"/>
    </location>
</feature>
<feature type="transmembrane region" description="Helical" evidence="2">
    <location>
        <begin position="477"/>
        <end position="497"/>
    </location>
</feature>
<feature type="binding site" evidence="1">
    <location>
        <position position="36"/>
    </location>
    <ligand>
        <name>FAD</name>
        <dbReference type="ChEBI" id="CHEBI:57692"/>
    </ligand>
</feature>
<feature type="binding site" evidence="1">
    <location>
        <position position="109"/>
    </location>
    <ligand>
        <name>FAD</name>
        <dbReference type="ChEBI" id="CHEBI:57692"/>
    </ligand>
</feature>
<feature type="binding site" evidence="1">
    <location>
        <position position="310"/>
    </location>
    <ligand>
        <name>FAD</name>
        <dbReference type="ChEBI" id="CHEBI:57692"/>
    </ligand>
</feature>
<feature type="binding site" evidence="1">
    <location>
        <position position="323"/>
    </location>
    <ligand>
        <name>FAD</name>
        <dbReference type="ChEBI" id="CHEBI:57692"/>
    </ligand>
</feature>
<feature type="glycosylation site" description="N-linked (GlcNAc...) asparagine" evidence="3">
    <location>
        <position position="139"/>
    </location>
</feature>
<feature type="glycosylation site" description="N-linked (GlcNAc...) asparagine" evidence="3">
    <location>
        <position position="220"/>
    </location>
</feature>
<feature type="glycosylation site" description="N-linked (GlcNAc...) asparagine" evidence="3">
    <location>
        <position position="515"/>
    </location>
</feature>
<name>DEP2_FUSLA</name>